<feature type="chain" id="PRO_1000116483" description="UDP-N-acetylglucosamine--N-acetylmuramyl-(pentapeptide) pyrophosphoryl-undecaprenol N-acetylglucosamine transferase">
    <location>
        <begin position="1"/>
        <end position="365"/>
    </location>
</feature>
<feature type="binding site" evidence="1">
    <location>
        <begin position="17"/>
        <end position="19"/>
    </location>
    <ligand>
        <name>UDP-N-acetyl-alpha-D-glucosamine</name>
        <dbReference type="ChEBI" id="CHEBI:57705"/>
    </ligand>
</feature>
<feature type="binding site" evidence="1">
    <location>
        <position position="129"/>
    </location>
    <ligand>
        <name>UDP-N-acetyl-alpha-D-glucosamine</name>
        <dbReference type="ChEBI" id="CHEBI:57705"/>
    </ligand>
</feature>
<feature type="binding site" evidence="1">
    <location>
        <position position="167"/>
    </location>
    <ligand>
        <name>UDP-N-acetyl-alpha-D-glucosamine</name>
        <dbReference type="ChEBI" id="CHEBI:57705"/>
    </ligand>
</feature>
<feature type="binding site" evidence="1">
    <location>
        <position position="194"/>
    </location>
    <ligand>
        <name>UDP-N-acetyl-alpha-D-glucosamine</name>
        <dbReference type="ChEBI" id="CHEBI:57705"/>
    </ligand>
</feature>
<feature type="binding site" evidence="1">
    <location>
        <position position="250"/>
    </location>
    <ligand>
        <name>UDP-N-acetyl-alpha-D-glucosamine</name>
        <dbReference type="ChEBI" id="CHEBI:57705"/>
    </ligand>
</feature>
<feature type="binding site" evidence="1">
    <location>
        <begin position="269"/>
        <end position="274"/>
    </location>
    <ligand>
        <name>UDP-N-acetyl-alpha-D-glucosamine</name>
        <dbReference type="ChEBI" id="CHEBI:57705"/>
    </ligand>
</feature>
<feature type="binding site" evidence="1">
    <location>
        <position position="295"/>
    </location>
    <ligand>
        <name>UDP-N-acetyl-alpha-D-glucosamine</name>
        <dbReference type="ChEBI" id="CHEBI:57705"/>
    </ligand>
</feature>
<name>MURG_SHEPW</name>
<evidence type="ECO:0000255" key="1">
    <source>
        <dbReference type="HAMAP-Rule" id="MF_00033"/>
    </source>
</evidence>
<reference key="1">
    <citation type="journal article" date="2008" name="PLoS ONE">
        <title>Environmental adaptation: genomic analysis of the piezotolerant and psychrotolerant deep-sea iron reducing bacterium Shewanella piezotolerans WP3.</title>
        <authorList>
            <person name="Wang F."/>
            <person name="Wang J."/>
            <person name="Jian H."/>
            <person name="Zhang B."/>
            <person name="Li S."/>
            <person name="Wang F."/>
            <person name="Zeng X."/>
            <person name="Gao L."/>
            <person name="Bartlett D.H."/>
            <person name="Yu J."/>
            <person name="Hu S."/>
            <person name="Xiao X."/>
        </authorList>
    </citation>
    <scope>NUCLEOTIDE SEQUENCE [LARGE SCALE GENOMIC DNA]</scope>
    <source>
        <strain>WP3 / JCM 13877</strain>
    </source>
</reference>
<keyword id="KW-0131">Cell cycle</keyword>
<keyword id="KW-0132">Cell division</keyword>
<keyword id="KW-0997">Cell inner membrane</keyword>
<keyword id="KW-1003">Cell membrane</keyword>
<keyword id="KW-0133">Cell shape</keyword>
<keyword id="KW-0961">Cell wall biogenesis/degradation</keyword>
<keyword id="KW-0328">Glycosyltransferase</keyword>
<keyword id="KW-0472">Membrane</keyword>
<keyword id="KW-0573">Peptidoglycan synthesis</keyword>
<keyword id="KW-0808">Transferase</keyword>
<comment type="function">
    <text evidence="1">Cell wall formation. Catalyzes the transfer of a GlcNAc subunit on undecaprenyl-pyrophosphoryl-MurNAc-pentapeptide (lipid intermediate I) to form undecaprenyl-pyrophosphoryl-MurNAc-(pentapeptide)GlcNAc (lipid intermediate II).</text>
</comment>
<comment type="catalytic activity">
    <reaction evidence="1">
        <text>di-trans,octa-cis-undecaprenyl diphospho-N-acetyl-alpha-D-muramoyl-L-alanyl-D-glutamyl-meso-2,6-diaminopimeloyl-D-alanyl-D-alanine + UDP-N-acetyl-alpha-D-glucosamine = di-trans,octa-cis-undecaprenyl diphospho-[N-acetyl-alpha-D-glucosaminyl-(1-&gt;4)]-N-acetyl-alpha-D-muramoyl-L-alanyl-D-glutamyl-meso-2,6-diaminopimeloyl-D-alanyl-D-alanine + UDP + H(+)</text>
        <dbReference type="Rhea" id="RHEA:31227"/>
        <dbReference type="ChEBI" id="CHEBI:15378"/>
        <dbReference type="ChEBI" id="CHEBI:57705"/>
        <dbReference type="ChEBI" id="CHEBI:58223"/>
        <dbReference type="ChEBI" id="CHEBI:61387"/>
        <dbReference type="ChEBI" id="CHEBI:61388"/>
        <dbReference type="EC" id="2.4.1.227"/>
    </reaction>
</comment>
<comment type="pathway">
    <text evidence="1">Cell wall biogenesis; peptidoglycan biosynthesis.</text>
</comment>
<comment type="subcellular location">
    <subcellularLocation>
        <location evidence="1">Cell inner membrane</location>
        <topology evidence="1">Peripheral membrane protein</topology>
        <orientation evidence="1">Cytoplasmic side</orientation>
    </subcellularLocation>
</comment>
<comment type="similarity">
    <text evidence="1">Belongs to the glycosyltransferase 28 family. MurG subfamily.</text>
</comment>
<protein>
    <recommendedName>
        <fullName evidence="1">UDP-N-acetylglucosamine--N-acetylmuramyl-(pentapeptide) pyrophosphoryl-undecaprenol N-acetylglucosamine transferase</fullName>
        <ecNumber evidence="1">2.4.1.227</ecNumber>
    </recommendedName>
    <alternativeName>
        <fullName evidence="1">Undecaprenyl-PP-MurNAc-pentapeptide-UDPGlcNAc GlcNAc transferase</fullName>
    </alternativeName>
</protein>
<gene>
    <name evidence="1" type="primary">murG</name>
    <name type="ordered locus">swp_2231</name>
</gene>
<organism>
    <name type="scientific">Shewanella piezotolerans (strain WP3 / JCM 13877)</name>
    <dbReference type="NCBI Taxonomy" id="225849"/>
    <lineage>
        <taxon>Bacteria</taxon>
        <taxon>Pseudomonadati</taxon>
        <taxon>Pseudomonadota</taxon>
        <taxon>Gammaproteobacteria</taxon>
        <taxon>Alteromonadales</taxon>
        <taxon>Shewanellaceae</taxon>
        <taxon>Shewanella</taxon>
    </lineage>
</organism>
<accession>B8CNL1</accession>
<dbReference type="EC" id="2.4.1.227" evidence="1"/>
<dbReference type="EMBL" id="CP000472">
    <property type="protein sequence ID" value="ACJ28980.1"/>
    <property type="molecule type" value="Genomic_DNA"/>
</dbReference>
<dbReference type="RefSeq" id="WP_020912341.1">
    <property type="nucleotide sequence ID" value="NC_011566.1"/>
</dbReference>
<dbReference type="SMR" id="B8CNL1"/>
<dbReference type="STRING" id="225849.swp_2231"/>
<dbReference type="CAZy" id="GT28">
    <property type="family name" value="Glycosyltransferase Family 28"/>
</dbReference>
<dbReference type="KEGG" id="swp:swp_2231"/>
<dbReference type="eggNOG" id="COG0707">
    <property type="taxonomic scope" value="Bacteria"/>
</dbReference>
<dbReference type="HOGENOM" id="CLU_037404_2_0_6"/>
<dbReference type="OrthoDB" id="9808936at2"/>
<dbReference type="UniPathway" id="UPA00219"/>
<dbReference type="Proteomes" id="UP000000753">
    <property type="component" value="Chromosome"/>
</dbReference>
<dbReference type="GO" id="GO:0005886">
    <property type="term" value="C:plasma membrane"/>
    <property type="evidence" value="ECO:0007669"/>
    <property type="project" value="UniProtKB-SubCell"/>
</dbReference>
<dbReference type="GO" id="GO:0051991">
    <property type="term" value="F:UDP-N-acetyl-D-glucosamine:N-acetylmuramoyl-L-alanyl-D-glutamyl-meso-2,6-diaminopimelyl-D-alanyl-D-alanine-diphosphoundecaprenol 4-beta-N-acetylglucosaminlytransferase activity"/>
    <property type="evidence" value="ECO:0007669"/>
    <property type="project" value="RHEA"/>
</dbReference>
<dbReference type="GO" id="GO:0050511">
    <property type="term" value="F:undecaprenyldiphospho-muramoylpentapeptide beta-N-acetylglucosaminyltransferase activity"/>
    <property type="evidence" value="ECO:0007669"/>
    <property type="project" value="UniProtKB-UniRule"/>
</dbReference>
<dbReference type="GO" id="GO:0005975">
    <property type="term" value="P:carbohydrate metabolic process"/>
    <property type="evidence" value="ECO:0007669"/>
    <property type="project" value="InterPro"/>
</dbReference>
<dbReference type="GO" id="GO:0051301">
    <property type="term" value="P:cell division"/>
    <property type="evidence" value="ECO:0007669"/>
    <property type="project" value="UniProtKB-KW"/>
</dbReference>
<dbReference type="GO" id="GO:0071555">
    <property type="term" value="P:cell wall organization"/>
    <property type="evidence" value="ECO:0007669"/>
    <property type="project" value="UniProtKB-KW"/>
</dbReference>
<dbReference type="GO" id="GO:0030259">
    <property type="term" value="P:lipid glycosylation"/>
    <property type="evidence" value="ECO:0007669"/>
    <property type="project" value="UniProtKB-UniRule"/>
</dbReference>
<dbReference type="GO" id="GO:0009252">
    <property type="term" value="P:peptidoglycan biosynthetic process"/>
    <property type="evidence" value="ECO:0007669"/>
    <property type="project" value="UniProtKB-UniRule"/>
</dbReference>
<dbReference type="GO" id="GO:0008360">
    <property type="term" value="P:regulation of cell shape"/>
    <property type="evidence" value="ECO:0007669"/>
    <property type="project" value="UniProtKB-KW"/>
</dbReference>
<dbReference type="CDD" id="cd03785">
    <property type="entry name" value="GT28_MurG"/>
    <property type="match status" value="1"/>
</dbReference>
<dbReference type="Gene3D" id="3.40.50.2000">
    <property type="entry name" value="Glycogen Phosphorylase B"/>
    <property type="match status" value="2"/>
</dbReference>
<dbReference type="HAMAP" id="MF_00033">
    <property type="entry name" value="MurG"/>
    <property type="match status" value="1"/>
</dbReference>
<dbReference type="InterPro" id="IPR006009">
    <property type="entry name" value="GlcNAc_MurG"/>
</dbReference>
<dbReference type="InterPro" id="IPR007235">
    <property type="entry name" value="Glyco_trans_28_C"/>
</dbReference>
<dbReference type="InterPro" id="IPR004276">
    <property type="entry name" value="GlycoTrans_28_N"/>
</dbReference>
<dbReference type="NCBIfam" id="TIGR01133">
    <property type="entry name" value="murG"/>
    <property type="match status" value="1"/>
</dbReference>
<dbReference type="PANTHER" id="PTHR21015:SF22">
    <property type="entry name" value="GLYCOSYLTRANSFERASE"/>
    <property type="match status" value="1"/>
</dbReference>
<dbReference type="PANTHER" id="PTHR21015">
    <property type="entry name" value="UDP-N-ACETYLGLUCOSAMINE--N-ACETYLMURAMYL-(PENTAPEPTIDE) PYROPHOSPHORYL-UNDECAPRENOL N-ACETYLGLUCOSAMINE TRANSFERASE 1"/>
    <property type="match status" value="1"/>
</dbReference>
<dbReference type="Pfam" id="PF04101">
    <property type="entry name" value="Glyco_tran_28_C"/>
    <property type="match status" value="1"/>
</dbReference>
<dbReference type="Pfam" id="PF03033">
    <property type="entry name" value="Glyco_transf_28"/>
    <property type="match status" value="1"/>
</dbReference>
<dbReference type="SUPFAM" id="SSF53756">
    <property type="entry name" value="UDP-Glycosyltransferase/glycogen phosphorylase"/>
    <property type="match status" value="1"/>
</dbReference>
<proteinExistence type="inferred from homology"/>
<sequence>MTDQAQQKRILIMAGGTGGHVFPALAVAKYLSQQGWKVRWLGTADRMEARLVPQHGFDIDFLDIKGVRGNGLLRKLAAPFKILRSVMQARSVIQDFKPDVVMGMGGFASGPGGVAARLSGIPLVLHEQNAIPGMTNKLLSKVATEVLCAFPDTFTDVRAETVGNPIRKELIALGGNRDKACEEEALKVLVVGGSLGAKIFNDVMPGALEGVSKTHPMTVWHQVGRNNLASVKAEYQHLGQDGSVKVAEFIDDMEAAYRWADVVVCRSGALTVSELAAVGLPSLLVPYPHAVDDHQTKNAQVLVEAGAAFLLPQPLVDSSKLISKLSMLASDRKELCKMGERARDVAVLDATQRVAYACIKLAEKG</sequence>